<sequence>MSISESPKKHPVLLIAGPTASGKSQLAIAMGIKTNGIIINADASQLYTDLQILTARPSDADEKILPHRLFGIQDGSEPASAVFWAELAKKEIKNAHESGRLPILVGGTGLYIRTLLEGIAPIPDIAPELREEVRSMSVEEAYSALQQEDPMAADRLRPTDKTRIMRALEVMRSTGHPLHYWQQKKTGGIANEIKLQSFVIIPPANILRSRCDKRFDQMLEQGAEKEVIRLMGRQLPADLPIMRAIGVREIASYIRGEIDRLTMIEKAKAATRQYAKRQRTWFRHQTDESWIKIFDDINFKKIDDFAIKLLSI</sequence>
<accession>Q9X5G1</accession>
<accession>Q5NNE8</accession>
<accession>Q9RNY1</accession>
<keyword id="KW-0067">ATP-binding</keyword>
<keyword id="KW-0460">Magnesium</keyword>
<keyword id="KW-0547">Nucleotide-binding</keyword>
<keyword id="KW-1185">Reference proteome</keyword>
<keyword id="KW-0808">Transferase</keyword>
<keyword id="KW-0819">tRNA processing</keyword>
<gene>
    <name evidence="1" type="primary">miaA</name>
    <name type="ordered locus">ZMO1138</name>
</gene>
<feature type="chain" id="PRO_0000164013" description="tRNA dimethylallyltransferase">
    <location>
        <begin position="1"/>
        <end position="312"/>
    </location>
</feature>
<feature type="binding site" evidence="1">
    <location>
        <begin position="17"/>
        <end position="24"/>
    </location>
    <ligand>
        <name>ATP</name>
        <dbReference type="ChEBI" id="CHEBI:30616"/>
    </ligand>
</feature>
<feature type="binding site" evidence="1">
    <location>
        <begin position="19"/>
        <end position="24"/>
    </location>
    <ligand>
        <name>substrate</name>
    </ligand>
</feature>
<feature type="site" description="Interaction with substrate tRNA" evidence="1">
    <location>
        <position position="108"/>
    </location>
</feature>
<feature type="sequence conflict" description="In Ref. 1; AAD29668." evidence="2" ref="1">
    <original>G</original>
    <variation>R</variation>
    <location>
        <position position="256"/>
    </location>
</feature>
<feature type="sequence conflict" description="In Ref. 1; AAD29668." evidence="2" ref="1">
    <original>KI</original>
    <variation>IF</variation>
    <location>
        <begin position="292"/>
        <end position="293"/>
    </location>
</feature>
<feature type="sequence conflict" description="In Ref. 1; AAD29668." evidence="2" ref="1">
    <original>KK</original>
    <variation>NP</variation>
    <location>
        <begin position="300"/>
        <end position="301"/>
    </location>
</feature>
<protein>
    <recommendedName>
        <fullName evidence="1">tRNA dimethylallyltransferase</fullName>
        <ecNumber evidence="1">2.5.1.75</ecNumber>
    </recommendedName>
    <alternativeName>
        <fullName evidence="1">Dimethylallyl diphosphate:tRNA dimethylallyltransferase</fullName>
        <shortName evidence="1">DMAPP:tRNA dimethylallyltransferase</shortName>
        <shortName evidence="1">DMATase</shortName>
    </alternativeName>
    <alternativeName>
        <fullName evidence="1">Isopentenyl-diphosphate:tRNA isopentenyltransferase</fullName>
        <shortName evidence="1">IPP transferase</shortName>
        <shortName evidence="1">IPPT</shortName>
        <shortName evidence="1">IPTase</shortName>
    </alternativeName>
</protein>
<name>MIAA_ZYMMO</name>
<evidence type="ECO:0000255" key="1">
    <source>
        <dbReference type="HAMAP-Rule" id="MF_00185"/>
    </source>
</evidence>
<evidence type="ECO:0000305" key="2"/>
<dbReference type="EC" id="2.5.1.75" evidence="1"/>
<dbReference type="EMBL" id="AF124757">
    <property type="protein sequence ID" value="AAD29668.1"/>
    <property type="molecule type" value="Genomic_DNA"/>
</dbReference>
<dbReference type="EMBL" id="AF176314">
    <property type="protein sequence ID" value="AAD53907.1"/>
    <property type="molecule type" value="Genomic_DNA"/>
</dbReference>
<dbReference type="EMBL" id="AE008692">
    <property type="protein sequence ID" value="AAV89762.2"/>
    <property type="status" value="ALT_INIT"/>
    <property type="molecule type" value="Genomic_DNA"/>
</dbReference>
<dbReference type="RefSeq" id="WP_017466419.1">
    <property type="nucleotide sequence ID" value="NZ_CP035711.1"/>
</dbReference>
<dbReference type="SMR" id="Q9X5G1"/>
<dbReference type="STRING" id="264203.ZMO1138"/>
<dbReference type="KEGG" id="zmo:ZMO1138"/>
<dbReference type="eggNOG" id="COG0324">
    <property type="taxonomic scope" value="Bacteria"/>
</dbReference>
<dbReference type="HOGENOM" id="CLU_032616_0_1_5"/>
<dbReference type="Proteomes" id="UP000001173">
    <property type="component" value="Chromosome"/>
</dbReference>
<dbReference type="GO" id="GO:0005524">
    <property type="term" value="F:ATP binding"/>
    <property type="evidence" value="ECO:0007669"/>
    <property type="project" value="UniProtKB-UniRule"/>
</dbReference>
<dbReference type="GO" id="GO:0052381">
    <property type="term" value="F:tRNA dimethylallyltransferase activity"/>
    <property type="evidence" value="ECO:0007669"/>
    <property type="project" value="UniProtKB-UniRule"/>
</dbReference>
<dbReference type="GO" id="GO:0006400">
    <property type="term" value="P:tRNA modification"/>
    <property type="evidence" value="ECO:0007669"/>
    <property type="project" value="TreeGrafter"/>
</dbReference>
<dbReference type="Gene3D" id="1.10.20.140">
    <property type="match status" value="1"/>
</dbReference>
<dbReference type="Gene3D" id="3.40.50.300">
    <property type="entry name" value="P-loop containing nucleotide triphosphate hydrolases"/>
    <property type="match status" value="1"/>
</dbReference>
<dbReference type="HAMAP" id="MF_00185">
    <property type="entry name" value="IPP_trans"/>
    <property type="match status" value="1"/>
</dbReference>
<dbReference type="InterPro" id="IPR039657">
    <property type="entry name" value="Dimethylallyltransferase"/>
</dbReference>
<dbReference type="InterPro" id="IPR018022">
    <property type="entry name" value="IPT"/>
</dbReference>
<dbReference type="InterPro" id="IPR027417">
    <property type="entry name" value="P-loop_NTPase"/>
</dbReference>
<dbReference type="NCBIfam" id="TIGR00174">
    <property type="entry name" value="miaA"/>
    <property type="match status" value="1"/>
</dbReference>
<dbReference type="PANTHER" id="PTHR11088">
    <property type="entry name" value="TRNA DIMETHYLALLYLTRANSFERASE"/>
    <property type="match status" value="1"/>
</dbReference>
<dbReference type="PANTHER" id="PTHR11088:SF60">
    <property type="entry name" value="TRNA DIMETHYLALLYLTRANSFERASE"/>
    <property type="match status" value="1"/>
</dbReference>
<dbReference type="Pfam" id="PF01715">
    <property type="entry name" value="IPPT"/>
    <property type="match status" value="1"/>
</dbReference>
<dbReference type="SUPFAM" id="SSF52540">
    <property type="entry name" value="P-loop containing nucleoside triphosphate hydrolases"/>
    <property type="match status" value="1"/>
</dbReference>
<reference key="1">
    <citation type="submission" date="1999-08" db="EMBL/GenBank/DDBJ databases">
        <authorList>
            <person name="Lee H.J."/>
            <person name="Kang H.S."/>
        </authorList>
    </citation>
    <scope>NUCLEOTIDE SEQUENCE [GENOMIC DNA]</scope>
    <source>
        <strain>ATCC 31821 / ZM4 / CP4</strain>
    </source>
</reference>
<reference key="2">
    <citation type="journal article" date="2005" name="Nat. Biotechnol.">
        <title>The genome sequence of the ethanologenic bacterium Zymomonas mobilis ZM4.</title>
        <authorList>
            <person name="Seo J.-S."/>
            <person name="Chong H."/>
            <person name="Park H.S."/>
            <person name="Yoon K.-O."/>
            <person name="Jung C."/>
            <person name="Kim J.J."/>
            <person name="Hong J.H."/>
            <person name="Kim H."/>
            <person name="Kim J.-H."/>
            <person name="Kil J.-I."/>
            <person name="Park C.J."/>
            <person name="Oh H.-M."/>
            <person name="Lee J.-S."/>
            <person name="Jin S.-J."/>
            <person name="Um H.-W."/>
            <person name="Lee H.-J."/>
            <person name="Oh S.-J."/>
            <person name="Kim J.Y."/>
            <person name="Kang H.L."/>
            <person name="Lee S.Y."/>
            <person name="Lee K.J."/>
            <person name="Kang H.S."/>
        </authorList>
    </citation>
    <scope>NUCLEOTIDE SEQUENCE [LARGE SCALE GENOMIC DNA]</scope>
    <source>
        <strain>ATCC 31821 / ZM4 / CP4</strain>
    </source>
</reference>
<comment type="function">
    <text evidence="1">Catalyzes the transfer of a dimethylallyl group onto the adenine at position 37 in tRNAs that read codons beginning with uridine, leading to the formation of N6-(dimethylallyl)adenosine (i(6)A).</text>
</comment>
<comment type="catalytic activity">
    <reaction evidence="1">
        <text>adenosine(37) in tRNA + dimethylallyl diphosphate = N(6)-dimethylallyladenosine(37) in tRNA + diphosphate</text>
        <dbReference type="Rhea" id="RHEA:26482"/>
        <dbReference type="Rhea" id="RHEA-COMP:10162"/>
        <dbReference type="Rhea" id="RHEA-COMP:10375"/>
        <dbReference type="ChEBI" id="CHEBI:33019"/>
        <dbReference type="ChEBI" id="CHEBI:57623"/>
        <dbReference type="ChEBI" id="CHEBI:74411"/>
        <dbReference type="ChEBI" id="CHEBI:74415"/>
        <dbReference type="EC" id="2.5.1.75"/>
    </reaction>
</comment>
<comment type="cofactor">
    <cofactor evidence="1">
        <name>Mg(2+)</name>
        <dbReference type="ChEBI" id="CHEBI:18420"/>
    </cofactor>
</comment>
<comment type="subunit">
    <text evidence="1">Monomer.</text>
</comment>
<comment type="similarity">
    <text evidence="1">Belongs to the IPP transferase family.</text>
</comment>
<comment type="sequence caution" evidence="2">
    <conflict type="erroneous initiation">
        <sequence resource="EMBL-CDS" id="AAV89762"/>
    </conflict>
</comment>
<organism>
    <name type="scientific">Zymomonas mobilis subsp. mobilis (strain ATCC 31821 / ZM4 / CP4)</name>
    <dbReference type="NCBI Taxonomy" id="264203"/>
    <lineage>
        <taxon>Bacteria</taxon>
        <taxon>Pseudomonadati</taxon>
        <taxon>Pseudomonadota</taxon>
        <taxon>Alphaproteobacteria</taxon>
        <taxon>Sphingomonadales</taxon>
        <taxon>Zymomonadaceae</taxon>
        <taxon>Zymomonas</taxon>
    </lineage>
</organism>
<proteinExistence type="inferred from homology"/>